<comment type="function">
    <text evidence="1">Exports L-alanine.</text>
</comment>
<comment type="subcellular location">
    <subcellularLocation>
        <location evidence="1">Cell inner membrane</location>
        <topology evidence="1">Multi-pass membrane protein</topology>
    </subcellularLocation>
</comment>
<comment type="similarity">
    <text evidence="1">Belongs to the AlaE exporter family.</text>
</comment>
<feature type="chain" id="PRO_0000169304" description="L-alanine exporter AlaE">
    <location>
        <begin position="1"/>
        <end position="149"/>
    </location>
</feature>
<feature type="transmembrane region" description="Helical" evidence="1">
    <location>
        <begin position="16"/>
        <end position="36"/>
    </location>
</feature>
<feature type="transmembrane region" description="Helical" evidence="1">
    <location>
        <begin position="46"/>
        <end position="66"/>
    </location>
</feature>
<feature type="transmembrane region" description="Helical" evidence="1">
    <location>
        <begin position="85"/>
        <end position="105"/>
    </location>
</feature>
<feature type="transmembrane region" description="Helical" evidence="1">
    <location>
        <begin position="112"/>
        <end position="132"/>
    </location>
</feature>
<name>ALAE_ECOL6</name>
<gene>
    <name evidence="1" type="primary">alaE</name>
    <name type="ordered locus">c3221</name>
</gene>
<reference key="1">
    <citation type="journal article" date="2002" name="Proc. Natl. Acad. Sci. U.S.A.">
        <title>Extensive mosaic structure revealed by the complete genome sequence of uropathogenic Escherichia coli.</title>
        <authorList>
            <person name="Welch R.A."/>
            <person name="Burland V."/>
            <person name="Plunkett G. III"/>
            <person name="Redford P."/>
            <person name="Roesch P."/>
            <person name="Rasko D."/>
            <person name="Buckles E.L."/>
            <person name="Liou S.-R."/>
            <person name="Boutin A."/>
            <person name="Hackett J."/>
            <person name="Stroud D."/>
            <person name="Mayhew G.F."/>
            <person name="Rose D.J."/>
            <person name="Zhou S."/>
            <person name="Schwartz D.C."/>
            <person name="Perna N.T."/>
            <person name="Mobley H.L.T."/>
            <person name="Donnenberg M.S."/>
            <person name="Blattner F.R."/>
        </authorList>
    </citation>
    <scope>NUCLEOTIDE SEQUENCE [LARGE SCALE GENOMIC DNA]</scope>
    <source>
        <strain>CFT073 / ATCC 700928 / UPEC</strain>
    </source>
</reference>
<proteinExistence type="inferred from homology"/>
<sequence>MFSPQSRLRHAVADTFAMVVYCSVVNMCIEVFLSGMSFEQSFYSRLVAIPVNILIAWPYGMYRDLFMRAARKVSPSGWIKNLADILAYVTFQSPVYVAILLVVGADWHQIMAAVSSNIVVSMLMGAVYGYFLDYCRRLFKVSRYQQVKA</sequence>
<protein>
    <recommendedName>
        <fullName evidence="1">L-alanine exporter AlaE</fullName>
    </recommendedName>
</protein>
<dbReference type="EMBL" id="AE014075">
    <property type="protein sequence ID" value="AAN81673.1"/>
    <property type="molecule type" value="Genomic_DNA"/>
</dbReference>
<dbReference type="RefSeq" id="WP_000492656.1">
    <property type="nucleotide sequence ID" value="NZ_CP051263.1"/>
</dbReference>
<dbReference type="STRING" id="199310.c3221"/>
<dbReference type="GeneID" id="75205913"/>
<dbReference type="KEGG" id="ecc:c3221"/>
<dbReference type="eggNOG" id="ENOG502ZRFS">
    <property type="taxonomic scope" value="Bacteria"/>
</dbReference>
<dbReference type="HOGENOM" id="CLU_126493_0_0_6"/>
<dbReference type="BioCyc" id="ECOL199310:C3221-MONOMER"/>
<dbReference type="Proteomes" id="UP000001410">
    <property type="component" value="Chromosome"/>
</dbReference>
<dbReference type="GO" id="GO:0005886">
    <property type="term" value="C:plasma membrane"/>
    <property type="evidence" value="ECO:0007669"/>
    <property type="project" value="UniProtKB-SubCell"/>
</dbReference>
<dbReference type="GO" id="GO:0034639">
    <property type="term" value="F:L-amino acid efflux transmembrane transporter activity"/>
    <property type="evidence" value="ECO:0007669"/>
    <property type="project" value="UniProtKB-UniRule"/>
</dbReference>
<dbReference type="GO" id="GO:0032973">
    <property type="term" value="P:amino acid export across plasma membrane"/>
    <property type="evidence" value="ECO:0007669"/>
    <property type="project" value="UniProtKB-UniRule"/>
</dbReference>
<dbReference type="HAMAP" id="MF_00914">
    <property type="entry name" value="L_Ala_exporter"/>
    <property type="match status" value="1"/>
</dbReference>
<dbReference type="InterPro" id="IPR010574">
    <property type="entry name" value="Ala_export_AlaE"/>
</dbReference>
<dbReference type="Pfam" id="PF06610">
    <property type="entry name" value="AlaE"/>
    <property type="match status" value="1"/>
</dbReference>
<organism>
    <name type="scientific">Escherichia coli O6:H1 (strain CFT073 / ATCC 700928 / UPEC)</name>
    <dbReference type="NCBI Taxonomy" id="199310"/>
    <lineage>
        <taxon>Bacteria</taxon>
        <taxon>Pseudomonadati</taxon>
        <taxon>Pseudomonadota</taxon>
        <taxon>Gammaproteobacteria</taxon>
        <taxon>Enterobacterales</taxon>
        <taxon>Enterobacteriaceae</taxon>
        <taxon>Escherichia</taxon>
    </lineage>
</organism>
<keyword id="KW-0029">Amino-acid transport</keyword>
<keyword id="KW-0997">Cell inner membrane</keyword>
<keyword id="KW-1003">Cell membrane</keyword>
<keyword id="KW-0472">Membrane</keyword>
<keyword id="KW-1185">Reference proteome</keyword>
<keyword id="KW-0812">Transmembrane</keyword>
<keyword id="KW-1133">Transmembrane helix</keyword>
<keyword id="KW-0813">Transport</keyword>
<accession>P64551</accession>
<accession>P76626</accession>
<evidence type="ECO:0000255" key="1">
    <source>
        <dbReference type="HAMAP-Rule" id="MF_00914"/>
    </source>
</evidence>